<reference key="1">
    <citation type="submission" date="2006-10" db="EMBL/GenBank/DDBJ databases">
        <authorList>
            <consortium name="NIH - Mammalian Gene Collection (MGC) project"/>
        </authorList>
    </citation>
    <scope>NUCLEOTIDE SEQUENCE [LARGE SCALE MRNA]</scope>
    <source>
        <strain>Hereford</strain>
        <tissue>Fetal muscle</tissue>
    </source>
</reference>
<feature type="signal peptide" evidence="3">
    <location>
        <begin position="1"/>
        <end position="25"/>
    </location>
</feature>
<feature type="chain" id="PRO_0000340091" description="CD99 antigen-like protein 2">
    <location>
        <begin position="26"/>
        <end position="217"/>
    </location>
</feature>
<feature type="topological domain" description="Extracellular" evidence="3">
    <location>
        <begin position="26"/>
        <end position="141"/>
    </location>
</feature>
<feature type="transmembrane region" description="Helical" evidence="3">
    <location>
        <begin position="142"/>
        <end position="162"/>
    </location>
</feature>
<feature type="topological domain" description="Cytoplasmic" evidence="3">
    <location>
        <begin position="163"/>
        <end position="217"/>
    </location>
</feature>
<feature type="region of interest" description="Disordered" evidence="4">
    <location>
        <begin position="36"/>
        <end position="136"/>
    </location>
</feature>
<feature type="compositionally biased region" description="Low complexity" evidence="4">
    <location>
        <begin position="50"/>
        <end position="64"/>
    </location>
</feature>
<feature type="compositionally biased region" description="Acidic residues" evidence="4">
    <location>
        <begin position="70"/>
        <end position="82"/>
    </location>
</feature>
<feature type="compositionally biased region" description="Basic and acidic residues" evidence="4">
    <location>
        <begin position="83"/>
        <end position="92"/>
    </location>
</feature>
<feature type="glycosylation site" description="O-linked (Xyl...) (chondroitin sulfate) serine" evidence="2">
    <location>
        <position position="134"/>
    </location>
</feature>
<proteinExistence type="evidence at transcript level"/>
<accession>A1A4K1</accession>
<name>C99L2_BOVIN</name>
<comment type="function">
    <text evidence="1">Plays a role in a late step of leukocyte extravasation helping cells to overcome the endothelial basement membrane. Acts at the same site as, but independently of, PECAM1 (By similarity). Homophilic adhesion molecule, but these interactions may not be required for cell aggregation (By similarity).</text>
</comment>
<comment type="subcellular location">
    <subcellularLocation>
        <location evidence="1">Cell membrane</location>
        <topology evidence="1">Single-pass type I membrane protein</topology>
        <orientation evidence="1">Extracellular side</orientation>
    </subcellularLocation>
    <subcellularLocation>
        <location evidence="1">Cell junction</location>
    </subcellularLocation>
    <subcellularLocation>
        <location evidence="2">Secreted</location>
    </subcellularLocation>
</comment>
<comment type="PTM">
    <text evidence="2">O-glycosylated.</text>
</comment>
<comment type="similarity">
    <text evidence="5">Belongs to the CD99 family.</text>
</comment>
<evidence type="ECO:0000250" key="1"/>
<evidence type="ECO:0000250" key="2">
    <source>
        <dbReference type="UniProtKB" id="Q8TCZ2"/>
    </source>
</evidence>
<evidence type="ECO:0000255" key="3"/>
<evidence type="ECO:0000256" key="4">
    <source>
        <dbReference type="SAM" id="MobiDB-lite"/>
    </source>
</evidence>
<evidence type="ECO:0000305" key="5"/>
<keyword id="KW-0130">Cell adhesion</keyword>
<keyword id="KW-0965">Cell junction</keyword>
<keyword id="KW-1003">Cell membrane</keyword>
<keyword id="KW-0325">Glycoprotein</keyword>
<keyword id="KW-0472">Membrane</keyword>
<keyword id="KW-0654">Proteoglycan</keyword>
<keyword id="KW-1185">Reference proteome</keyword>
<keyword id="KW-0964">Secreted</keyword>
<keyword id="KW-0732">Signal</keyword>
<keyword id="KW-0812">Transmembrane</keyword>
<keyword id="KW-1133">Transmembrane helix</keyword>
<organism>
    <name type="scientific">Bos taurus</name>
    <name type="common">Bovine</name>
    <dbReference type="NCBI Taxonomy" id="9913"/>
    <lineage>
        <taxon>Eukaryota</taxon>
        <taxon>Metazoa</taxon>
        <taxon>Chordata</taxon>
        <taxon>Craniata</taxon>
        <taxon>Vertebrata</taxon>
        <taxon>Euteleostomi</taxon>
        <taxon>Mammalia</taxon>
        <taxon>Eutheria</taxon>
        <taxon>Laurasiatheria</taxon>
        <taxon>Artiodactyla</taxon>
        <taxon>Ruminantia</taxon>
        <taxon>Pecora</taxon>
        <taxon>Bovidae</taxon>
        <taxon>Bovinae</taxon>
        <taxon>Bos</taxon>
    </lineage>
</organism>
<gene>
    <name type="primary">CD99L2</name>
</gene>
<dbReference type="EMBL" id="BC126619">
    <property type="protein sequence ID" value="AAI26620.1"/>
    <property type="molecule type" value="mRNA"/>
</dbReference>
<dbReference type="RefSeq" id="NP_001077227.1">
    <property type="nucleotide sequence ID" value="NM_001083758.1"/>
</dbReference>
<dbReference type="FunCoup" id="A1A4K1">
    <property type="interactions" value="1047"/>
</dbReference>
<dbReference type="STRING" id="9913.ENSBTAP00000069370"/>
<dbReference type="GlyGen" id="A1A4K1">
    <property type="glycosylation" value="1 site"/>
</dbReference>
<dbReference type="PaxDb" id="9913-ENSBTAP00000054220"/>
<dbReference type="GeneID" id="613644"/>
<dbReference type="KEGG" id="bta:613644"/>
<dbReference type="CTD" id="83692"/>
<dbReference type="VEuPathDB" id="HostDB:ENSBTAG00000052670"/>
<dbReference type="eggNOG" id="ENOG502RZ6C">
    <property type="taxonomic scope" value="Eukaryota"/>
</dbReference>
<dbReference type="HOGENOM" id="CLU_2378281_0_0_1"/>
<dbReference type="InParanoid" id="A1A4K1"/>
<dbReference type="OMA" id="KPDNSFW"/>
<dbReference type="OrthoDB" id="8961553at2759"/>
<dbReference type="Proteomes" id="UP000009136">
    <property type="component" value="Chromosome X"/>
</dbReference>
<dbReference type="Bgee" id="ENSBTAG00000052670">
    <property type="expression patterns" value="Expressed in hypothalamus and 105 other cell types or tissues"/>
</dbReference>
<dbReference type="GO" id="GO:0070161">
    <property type="term" value="C:anchoring junction"/>
    <property type="evidence" value="ECO:0007669"/>
    <property type="project" value="UniProtKB-SubCell"/>
</dbReference>
<dbReference type="GO" id="GO:0005576">
    <property type="term" value="C:extracellular region"/>
    <property type="evidence" value="ECO:0007669"/>
    <property type="project" value="UniProtKB-SubCell"/>
</dbReference>
<dbReference type="GO" id="GO:0005886">
    <property type="term" value="C:plasma membrane"/>
    <property type="evidence" value="ECO:0007669"/>
    <property type="project" value="UniProtKB-SubCell"/>
</dbReference>
<dbReference type="GO" id="GO:0007155">
    <property type="term" value="P:cell adhesion"/>
    <property type="evidence" value="ECO:0007669"/>
    <property type="project" value="UniProtKB-KW"/>
</dbReference>
<dbReference type="InterPro" id="IPR022078">
    <property type="entry name" value="CD99L2"/>
</dbReference>
<dbReference type="PANTHER" id="PTHR15076:SF12">
    <property type="entry name" value="CD99 ANTIGEN-LIKE PROTEIN 2"/>
    <property type="match status" value="1"/>
</dbReference>
<dbReference type="PANTHER" id="PTHR15076">
    <property type="entry name" value="CD99/MIC2 PROTEIN RELATED"/>
    <property type="match status" value="1"/>
</dbReference>
<dbReference type="Pfam" id="PF12301">
    <property type="entry name" value="CD99L2"/>
    <property type="match status" value="1"/>
</dbReference>
<sequence length="217" mass="22987">MVAWRWACLICLAFSLTTLVQRGSGDTGGFRLEDAVEGTSSVKQRWDHVTTTTRRPGATRAPAKPAGPPAEDDFNLADALDDQNDRDHDRKKPSIGGGGFSDKDLEDIVGGGDYKPDKGKGGGQYGGGDNSDDSGMSAETGTIAGVASALAMALIGAVSSYISYQQKKFCFSIQQGLNADYVKGENLEAVVCEEPQVKYSALQTQSTEPPPPEPPRI</sequence>
<protein>
    <recommendedName>
        <fullName>CD99 antigen-like protein 2</fullName>
    </recommendedName>
    <cdAntigenName>CD99</cdAntigenName>
</protein>